<proteinExistence type="inferred from homology"/>
<reference key="1">
    <citation type="journal article" date="2004" name="Nature">
        <title>Genome evolution in yeasts.</title>
        <authorList>
            <person name="Dujon B."/>
            <person name="Sherman D."/>
            <person name="Fischer G."/>
            <person name="Durrens P."/>
            <person name="Casaregola S."/>
            <person name="Lafontaine I."/>
            <person name="de Montigny J."/>
            <person name="Marck C."/>
            <person name="Neuveglise C."/>
            <person name="Talla E."/>
            <person name="Goffard N."/>
            <person name="Frangeul L."/>
            <person name="Aigle M."/>
            <person name="Anthouard V."/>
            <person name="Babour A."/>
            <person name="Barbe V."/>
            <person name="Barnay S."/>
            <person name="Blanchin S."/>
            <person name="Beckerich J.-M."/>
            <person name="Beyne E."/>
            <person name="Bleykasten C."/>
            <person name="Boisrame A."/>
            <person name="Boyer J."/>
            <person name="Cattolico L."/>
            <person name="Confanioleri F."/>
            <person name="de Daruvar A."/>
            <person name="Despons L."/>
            <person name="Fabre E."/>
            <person name="Fairhead C."/>
            <person name="Ferry-Dumazet H."/>
            <person name="Groppi A."/>
            <person name="Hantraye F."/>
            <person name="Hennequin C."/>
            <person name="Jauniaux N."/>
            <person name="Joyet P."/>
            <person name="Kachouri R."/>
            <person name="Kerrest A."/>
            <person name="Koszul R."/>
            <person name="Lemaire M."/>
            <person name="Lesur I."/>
            <person name="Ma L."/>
            <person name="Muller H."/>
            <person name="Nicaud J.-M."/>
            <person name="Nikolski M."/>
            <person name="Oztas S."/>
            <person name="Ozier-Kalogeropoulos O."/>
            <person name="Pellenz S."/>
            <person name="Potier S."/>
            <person name="Richard G.-F."/>
            <person name="Straub M.-L."/>
            <person name="Suleau A."/>
            <person name="Swennen D."/>
            <person name="Tekaia F."/>
            <person name="Wesolowski-Louvel M."/>
            <person name="Westhof E."/>
            <person name="Wirth B."/>
            <person name="Zeniou-Meyer M."/>
            <person name="Zivanovic Y."/>
            <person name="Bolotin-Fukuhara M."/>
            <person name="Thierry A."/>
            <person name="Bouchier C."/>
            <person name="Caudron B."/>
            <person name="Scarpelli C."/>
            <person name="Gaillardin C."/>
            <person name="Weissenbach J."/>
            <person name="Wincker P."/>
            <person name="Souciet J.-L."/>
        </authorList>
    </citation>
    <scope>NUCLEOTIDE SEQUENCE [LARGE SCALE GENOMIC DNA]</scope>
    <source>
        <strain>ATCC 2001 / BCRC 20586 / JCM 3761 / NBRC 0622 / NRRL Y-65 / CBS 138</strain>
    </source>
</reference>
<comment type="function">
    <text evidence="1">Component of the mitochondrial inner membrane i-AAA protease complex required for mitochondrial inner membrane protein turnover.</text>
</comment>
<comment type="subunit">
    <text evidence="1">Component of the mitochondrial inner membrane i-AAA protease complex.</text>
</comment>
<comment type="subcellular location">
    <subcellularLocation>
        <location evidence="1">Mitochondrion inner membrane</location>
        <topology evidence="1">Multi-pass membrane protein</topology>
    </subcellularLocation>
</comment>
<comment type="similarity">
    <text evidence="4">Belongs to the MGR1 family.</text>
</comment>
<accession>Q6FX96</accession>
<protein>
    <recommendedName>
        <fullName>Mitochondrial inner membrane i-AAA protease complex subunit MGR1</fullName>
    </recommendedName>
</protein>
<organism>
    <name type="scientific">Candida glabrata (strain ATCC 2001 / BCRC 20586 / JCM 3761 / NBRC 0622 / NRRL Y-65 / CBS 138)</name>
    <name type="common">Yeast</name>
    <name type="synonym">Nakaseomyces glabratus</name>
    <dbReference type="NCBI Taxonomy" id="284593"/>
    <lineage>
        <taxon>Eukaryota</taxon>
        <taxon>Fungi</taxon>
        <taxon>Dikarya</taxon>
        <taxon>Ascomycota</taxon>
        <taxon>Saccharomycotina</taxon>
        <taxon>Saccharomycetes</taxon>
        <taxon>Saccharomycetales</taxon>
        <taxon>Saccharomycetaceae</taxon>
        <taxon>Nakaseomyces</taxon>
    </lineage>
</organism>
<gene>
    <name type="primary">MGR1</name>
    <name type="ordered locus">CAGL0B00682g</name>
</gene>
<sequence>MGIFTPPGKSDKRDANEEKPTLLGSNSKDETDVEKFWVRPSLGLKLWGPLVPASDNKTGLWTLVAVQSMVGLLCFYRFKSLRIIDRNGALNSVGKSGIRPTSVLVNEPKLYNSAFTQQEAVSGKPLVKKDIADFPTLNRFSTTHGDMFVNTTNVNRNTPSLSAAPVVASPVLSSAGHQSEIMAKSEAKNNWKSFFKSDNWLIFKKVFYLLAGSIILSQSMLEACRLTILRYDPWCEEAKTVREKKFFNNIVKFYHEGIDPTKVKVKDAVSGNIMPTNVPEVRQSVALVRAQTEAENPIISWFGPIEYKPMTFSEFLDRLEYHLDMFEYFQGKRAANETALGFLTGIKTETSNLRDQNAQNRSRILKELKSEDQLSNDLSIKTGNAKIPKGTQRHGFSAAANRSIILEEDVAVPEDIDLNEIWTLYDPWLNLALETSLSIKFIPTVLINQDGITENSMMDTEATIGDKAGVIPENSNKPEEPRQ</sequence>
<keyword id="KW-0472">Membrane</keyword>
<keyword id="KW-0496">Mitochondrion</keyword>
<keyword id="KW-0999">Mitochondrion inner membrane</keyword>
<keyword id="KW-1185">Reference proteome</keyword>
<keyword id="KW-0812">Transmembrane</keyword>
<keyword id="KW-1133">Transmembrane helix</keyword>
<dbReference type="EMBL" id="CR380948">
    <property type="protein sequence ID" value="CAG57900.1"/>
    <property type="molecule type" value="Genomic_DNA"/>
</dbReference>
<dbReference type="RefSeq" id="XP_445000.1">
    <property type="nucleotide sequence ID" value="XM_445000.1"/>
</dbReference>
<dbReference type="FunCoup" id="Q6FX96">
    <property type="interactions" value="60"/>
</dbReference>
<dbReference type="STRING" id="284593.Q6FX96"/>
<dbReference type="EnsemblFungi" id="CAGL0B00682g-T">
    <property type="protein sequence ID" value="CAGL0B00682g-T-p1"/>
    <property type="gene ID" value="CAGL0B00682g"/>
</dbReference>
<dbReference type="KEGG" id="cgr:2886622"/>
<dbReference type="CGD" id="CAL0127118">
    <property type="gene designation" value="CAGL0B00682g"/>
</dbReference>
<dbReference type="VEuPathDB" id="FungiDB:CAGL0B00682g"/>
<dbReference type="eggNOG" id="ENOG502QR67">
    <property type="taxonomic scope" value="Eukaryota"/>
</dbReference>
<dbReference type="HOGENOM" id="CLU_039216_0_0_1"/>
<dbReference type="InParanoid" id="Q6FX96"/>
<dbReference type="OMA" id="FYHEGID"/>
<dbReference type="Proteomes" id="UP000002428">
    <property type="component" value="Chromosome B"/>
</dbReference>
<dbReference type="GO" id="GO:0031942">
    <property type="term" value="C:i-AAA complex"/>
    <property type="evidence" value="ECO:0007669"/>
    <property type="project" value="EnsemblFungi"/>
</dbReference>
<dbReference type="GO" id="GO:0051787">
    <property type="term" value="F:misfolded protein binding"/>
    <property type="evidence" value="ECO:0007669"/>
    <property type="project" value="EnsemblFungi"/>
</dbReference>
<dbReference type="GO" id="GO:0006515">
    <property type="term" value="P:protein quality control for misfolded or incompletely synthesized proteins"/>
    <property type="evidence" value="ECO:0007669"/>
    <property type="project" value="EnsemblFungi"/>
</dbReference>
<dbReference type="InterPro" id="IPR013911">
    <property type="entry name" value="i-AAA_Mgr1"/>
</dbReference>
<dbReference type="Pfam" id="PF08602">
    <property type="entry name" value="Mgr1"/>
    <property type="match status" value="1"/>
</dbReference>
<evidence type="ECO:0000250" key="1"/>
<evidence type="ECO:0000255" key="2"/>
<evidence type="ECO:0000256" key="3">
    <source>
        <dbReference type="SAM" id="MobiDB-lite"/>
    </source>
</evidence>
<evidence type="ECO:0000305" key="4"/>
<name>MGR1_CANGA</name>
<feature type="chain" id="PRO_0000324411" description="Mitochondrial inner membrane i-AAA protease complex subunit MGR1">
    <location>
        <begin position="1"/>
        <end position="483"/>
    </location>
</feature>
<feature type="topological domain" description="Mitochondrial intermembrane" evidence="1">
    <location>
        <begin position="1"/>
        <end position="59"/>
    </location>
</feature>
<feature type="transmembrane region" description="Helical" evidence="2">
    <location>
        <begin position="60"/>
        <end position="76"/>
    </location>
</feature>
<feature type="topological domain" description="Mitochondrial matrix" evidence="1">
    <location>
        <begin position="77"/>
        <end position="205"/>
    </location>
</feature>
<feature type="transmembrane region" description="Helical" evidence="2">
    <location>
        <begin position="206"/>
        <end position="222"/>
    </location>
</feature>
<feature type="topological domain" description="Mitochondrial intermembrane" evidence="1">
    <location>
        <begin position="223"/>
        <end position="483"/>
    </location>
</feature>
<feature type="region of interest" description="Disordered" evidence="3">
    <location>
        <begin position="1"/>
        <end position="27"/>
    </location>
</feature>
<feature type="compositionally biased region" description="Basic and acidic residues" evidence="3">
    <location>
        <begin position="9"/>
        <end position="20"/>
    </location>
</feature>